<gene>
    <name evidence="6" type="primary">TMCO1</name>
</gene>
<accession>A0A8I3PI99</accession>
<reference key="1">
    <citation type="journal article" date="2005" name="Nature">
        <title>Genome sequence, comparative analysis and haplotype structure of the domestic dog.</title>
        <authorList>
            <person name="Lindblad-Toh K."/>
            <person name="Wade C.M."/>
            <person name="Mikkelsen T.S."/>
            <person name="Karlsson E.K."/>
            <person name="Jaffe D.B."/>
            <person name="Kamal M."/>
            <person name="Clamp M."/>
            <person name="Chang J.L."/>
            <person name="Kulbokas E.J. III"/>
            <person name="Zody M.C."/>
            <person name="Mauceli E."/>
            <person name="Xie X."/>
            <person name="Breen M."/>
            <person name="Wayne R.K."/>
            <person name="Ostrander E.A."/>
            <person name="Ponting C.P."/>
            <person name="Galibert F."/>
            <person name="Smith D.R."/>
            <person name="deJong P.J."/>
            <person name="Kirkness E.F."/>
            <person name="Alvarez P."/>
            <person name="Biagi T."/>
            <person name="Brockman W."/>
            <person name="Butler J."/>
            <person name="Chin C.-W."/>
            <person name="Cook A."/>
            <person name="Cuff J."/>
            <person name="Daly M.J."/>
            <person name="DeCaprio D."/>
            <person name="Gnerre S."/>
            <person name="Grabherr M."/>
            <person name="Kellis M."/>
            <person name="Kleber M."/>
            <person name="Bardeleben C."/>
            <person name="Goodstadt L."/>
            <person name="Heger A."/>
            <person name="Hitte C."/>
            <person name="Kim L."/>
            <person name="Koepfli K.-P."/>
            <person name="Parker H.G."/>
            <person name="Pollinger J.P."/>
            <person name="Searle S.M.J."/>
            <person name="Sutter N.B."/>
            <person name="Thomas R."/>
            <person name="Webber C."/>
            <person name="Baldwin J."/>
            <person name="Abebe A."/>
            <person name="Abouelleil A."/>
            <person name="Aftuck L."/>
            <person name="Ait-Zahra M."/>
            <person name="Aldredge T."/>
            <person name="Allen N."/>
            <person name="An P."/>
            <person name="Anderson S."/>
            <person name="Antoine C."/>
            <person name="Arachchi H."/>
            <person name="Aslam A."/>
            <person name="Ayotte L."/>
            <person name="Bachantsang P."/>
            <person name="Barry A."/>
            <person name="Bayul T."/>
            <person name="Benamara M."/>
            <person name="Berlin A."/>
            <person name="Bessette D."/>
            <person name="Blitshteyn B."/>
            <person name="Bloom T."/>
            <person name="Blye J."/>
            <person name="Boguslavskiy L."/>
            <person name="Bonnet C."/>
            <person name="Boukhgalter B."/>
            <person name="Brown A."/>
            <person name="Cahill P."/>
            <person name="Calixte N."/>
            <person name="Camarata J."/>
            <person name="Cheshatsang Y."/>
            <person name="Chu J."/>
            <person name="Citroen M."/>
            <person name="Collymore A."/>
            <person name="Cooke P."/>
            <person name="Dawoe T."/>
            <person name="Daza R."/>
            <person name="Decktor K."/>
            <person name="DeGray S."/>
            <person name="Dhargay N."/>
            <person name="Dooley K."/>
            <person name="Dooley K."/>
            <person name="Dorje P."/>
            <person name="Dorjee K."/>
            <person name="Dorris L."/>
            <person name="Duffey N."/>
            <person name="Dupes A."/>
            <person name="Egbiremolen O."/>
            <person name="Elong R."/>
            <person name="Falk J."/>
            <person name="Farina A."/>
            <person name="Faro S."/>
            <person name="Ferguson D."/>
            <person name="Ferreira P."/>
            <person name="Fisher S."/>
            <person name="FitzGerald M."/>
            <person name="Foley K."/>
            <person name="Foley C."/>
            <person name="Franke A."/>
            <person name="Friedrich D."/>
            <person name="Gage D."/>
            <person name="Garber M."/>
            <person name="Gearin G."/>
            <person name="Giannoukos G."/>
            <person name="Goode T."/>
            <person name="Goyette A."/>
            <person name="Graham J."/>
            <person name="Grandbois E."/>
            <person name="Gyaltsen K."/>
            <person name="Hafez N."/>
            <person name="Hagopian D."/>
            <person name="Hagos B."/>
            <person name="Hall J."/>
            <person name="Healy C."/>
            <person name="Hegarty R."/>
            <person name="Honan T."/>
            <person name="Horn A."/>
            <person name="Houde N."/>
            <person name="Hughes L."/>
            <person name="Hunnicutt L."/>
            <person name="Husby M."/>
            <person name="Jester B."/>
            <person name="Jones C."/>
            <person name="Kamat A."/>
            <person name="Kanga B."/>
            <person name="Kells C."/>
            <person name="Khazanovich D."/>
            <person name="Kieu A.C."/>
            <person name="Kisner P."/>
            <person name="Kumar M."/>
            <person name="Lance K."/>
            <person name="Landers T."/>
            <person name="Lara M."/>
            <person name="Lee W."/>
            <person name="Leger J.-P."/>
            <person name="Lennon N."/>
            <person name="Leuper L."/>
            <person name="LeVine S."/>
            <person name="Liu J."/>
            <person name="Liu X."/>
            <person name="Lokyitsang Y."/>
            <person name="Lokyitsang T."/>
            <person name="Lui A."/>
            <person name="Macdonald J."/>
            <person name="Major J."/>
            <person name="Marabella R."/>
            <person name="Maru K."/>
            <person name="Matthews C."/>
            <person name="McDonough S."/>
            <person name="Mehta T."/>
            <person name="Meldrim J."/>
            <person name="Melnikov A."/>
            <person name="Meneus L."/>
            <person name="Mihalev A."/>
            <person name="Mihova T."/>
            <person name="Miller K."/>
            <person name="Mittelman R."/>
            <person name="Mlenga V."/>
            <person name="Mulrain L."/>
            <person name="Munson G."/>
            <person name="Navidi A."/>
            <person name="Naylor J."/>
            <person name="Nguyen T."/>
            <person name="Nguyen N."/>
            <person name="Nguyen C."/>
            <person name="Nguyen T."/>
            <person name="Nicol R."/>
            <person name="Norbu N."/>
            <person name="Norbu C."/>
            <person name="Novod N."/>
            <person name="Nyima T."/>
            <person name="Olandt P."/>
            <person name="O'Neill B."/>
            <person name="O'Neill K."/>
            <person name="Osman S."/>
            <person name="Oyono L."/>
            <person name="Patti C."/>
            <person name="Perrin D."/>
            <person name="Phunkhang P."/>
            <person name="Pierre F."/>
            <person name="Priest M."/>
            <person name="Rachupka A."/>
            <person name="Raghuraman S."/>
            <person name="Rameau R."/>
            <person name="Ray V."/>
            <person name="Raymond C."/>
            <person name="Rege F."/>
            <person name="Rise C."/>
            <person name="Rogers J."/>
            <person name="Rogov P."/>
            <person name="Sahalie J."/>
            <person name="Settipalli S."/>
            <person name="Sharpe T."/>
            <person name="Shea T."/>
            <person name="Sheehan M."/>
            <person name="Sherpa N."/>
            <person name="Shi J."/>
            <person name="Shih D."/>
            <person name="Sloan J."/>
            <person name="Smith C."/>
            <person name="Sparrow T."/>
            <person name="Stalker J."/>
            <person name="Stange-Thomann N."/>
            <person name="Stavropoulos S."/>
            <person name="Stone C."/>
            <person name="Stone S."/>
            <person name="Sykes S."/>
            <person name="Tchuinga P."/>
            <person name="Tenzing P."/>
            <person name="Tesfaye S."/>
            <person name="Thoulutsang D."/>
            <person name="Thoulutsang Y."/>
            <person name="Topham K."/>
            <person name="Topping I."/>
            <person name="Tsamla T."/>
            <person name="Vassiliev H."/>
            <person name="Venkataraman V."/>
            <person name="Vo A."/>
            <person name="Wangchuk T."/>
            <person name="Wangdi T."/>
            <person name="Weiand M."/>
            <person name="Wilkinson J."/>
            <person name="Wilson A."/>
            <person name="Yadav S."/>
            <person name="Yang S."/>
            <person name="Yang X."/>
            <person name="Young G."/>
            <person name="Yu Q."/>
            <person name="Zainoun J."/>
            <person name="Zembek L."/>
            <person name="Zimmer A."/>
            <person name="Lander E.S."/>
        </authorList>
    </citation>
    <scope>NUCLEOTIDE SEQUENCE [LARGE SCALE GENOMIC DNA]</scope>
    <source>
        <strain>Boxer</strain>
    </source>
</reference>
<reference evidence="8" key="2">
    <citation type="journal article" date="2022" name="Nature">
        <title>Mechanism of an intramembrane chaperone for multipass membrane proteins.</title>
        <authorList>
            <person name="Smalinskaite L."/>
            <person name="Kim M.K."/>
            <person name="Lewis A.J.O."/>
            <person name="Keenan R.J."/>
            <person name="Hegde R.S."/>
        </authorList>
    </citation>
    <scope>STRUCTURE BY ELECTRON MICROSCOPY (3.88 ANGSTROMS) IN COMPLEX WITH THE MULTI-PASS TRANSLOCON COMPLEX</scope>
    <scope>FUNCTION</scope>
    <scope>IDENTIFICATION IN THE MULTI-PASS TRANSLOCON COMPLEX</scope>
    <scope>SUBCELLULAR LOCATION</scope>
</reference>
<dbReference type="RefSeq" id="XP_038304460.1">
    <property type="nucleotide sequence ID" value="XM_038448532.1"/>
</dbReference>
<dbReference type="RefSeq" id="XP_038442142.1">
    <property type="nucleotide sequence ID" value="XM_038586214.1"/>
</dbReference>
<dbReference type="RefSeq" id="XP_549626.4">
    <property type="nucleotide sequence ID" value="XM_549626.7"/>
</dbReference>
<dbReference type="PDB" id="7TUT">
    <property type="method" value="EM"/>
    <property type="resolution" value="3.88 A"/>
    <property type="chains" value="8=1-188"/>
</dbReference>
<dbReference type="PDBsum" id="7TUT"/>
<dbReference type="EMDB" id="EMD-26133"/>
<dbReference type="SMR" id="A0A8I3PI99"/>
<dbReference type="FunCoup" id="A0A8I3PI99">
    <property type="interactions" value="1600"/>
</dbReference>
<dbReference type="Ensembl" id="ENSCAFT00000021367.5">
    <property type="protein sequence ID" value="ENSCAFP00000019839.3"/>
    <property type="gene ID" value="ENSCAFG00000013472.5"/>
</dbReference>
<dbReference type="Ensembl" id="ENSCAFT00805044664">
    <property type="protein sequence ID" value="ENSCAFP00805035011"/>
    <property type="gene ID" value="ENSCAFG00805024686"/>
</dbReference>
<dbReference type="Ensembl" id="ENSCAFT00845043248.1">
    <property type="protein sequence ID" value="ENSCAFP00845033902.1"/>
    <property type="gene ID" value="ENSCAFG00845024491.1"/>
</dbReference>
<dbReference type="GeneID" id="478992"/>
<dbReference type="CTD" id="54499"/>
<dbReference type="VGNC" id="VGNC:47431">
    <property type="gene designation" value="TMCO1"/>
</dbReference>
<dbReference type="GeneTree" id="ENSGT00390000002659"/>
<dbReference type="OMA" id="GMFGDFK"/>
<dbReference type="OrthoDB" id="342726at2759"/>
<dbReference type="Proteomes" id="UP000002254">
    <property type="component" value="Chromosome 38"/>
</dbReference>
<dbReference type="Proteomes" id="UP000694429">
    <property type="component" value="Unplaced"/>
</dbReference>
<dbReference type="Proteomes" id="UP000694542">
    <property type="component" value="Unplaced"/>
</dbReference>
<dbReference type="Proteomes" id="UP000805418">
    <property type="component" value="Chromosome 38"/>
</dbReference>
<dbReference type="GO" id="GO:0005737">
    <property type="term" value="C:cytoplasm"/>
    <property type="evidence" value="ECO:0000318"/>
    <property type="project" value="GO_Central"/>
</dbReference>
<dbReference type="GO" id="GO:0005783">
    <property type="term" value="C:endoplasmic reticulum"/>
    <property type="evidence" value="ECO:0000318"/>
    <property type="project" value="GO_Central"/>
</dbReference>
<dbReference type="GO" id="GO:0005789">
    <property type="term" value="C:endoplasmic reticulum membrane"/>
    <property type="evidence" value="ECO:0000314"/>
    <property type="project" value="UniProtKB"/>
</dbReference>
<dbReference type="GO" id="GO:0000139">
    <property type="term" value="C:Golgi membrane"/>
    <property type="evidence" value="ECO:0007669"/>
    <property type="project" value="UniProtKB-SubCell"/>
</dbReference>
<dbReference type="GO" id="GO:0031966">
    <property type="term" value="C:mitochondrial membrane"/>
    <property type="evidence" value="ECO:0007669"/>
    <property type="project" value="UniProtKB-SubCell"/>
</dbReference>
<dbReference type="GO" id="GO:0160064">
    <property type="term" value="C:multi-pass translocon complex"/>
    <property type="evidence" value="ECO:0000314"/>
    <property type="project" value="UniProtKB"/>
</dbReference>
<dbReference type="GO" id="GO:0005262">
    <property type="term" value="F:calcium channel activity"/>
    <property type="evidence" value="ECO:0000318"/>
    <property type="project" value="GO_Central"/>
</dbReference>
<dbReference type="GO" id="GO:0043022">
    <property type="term" value="F:ribosome binding"/>
    <property type="evidence" value="ECO:0007669"/>
    <property type="project" value="Ensembl"/>
</dbReference>
<dbReference type="GO" id="GO:0032469">
    <property type="term" value="P:endoplasmic reticulum calcium ion homeostasis"/>
    <property type="evidence" value="ECO:0000318"/>
    <property type="project" value="GO_Central"/>
</dbReference>
<dbReference type="GO" id="GO:0006983">
    <property type="term" value="P:ER overload response"/>
    <property type="evidence" value="ECO:0007669"/>
    <property type="project" value="Ensembl"/>
</dbReference>
<dbReference type="GO" id="GO:0160063">
    <property type="term" value="P:multi-pass transmembrane protein insertion into ER membrane"/>
    <property type="evidence" value="ECO:0000314"/>
    <property type="project" value="UniProtKB"/>
</dbReference>
<dbReference type="GO" id="GO:0001503">
    <property type="term" value="P:ossification"/>
    <property type="evidence" value="ECO:0000250"/>
    <property type="project" value="UniProtKB"/>
</dbReference>
<dbReference type="InterPro" id="IPR002809">
    <property type="entry name" value="EMC3/TMCO1"/>
</dbReference>
<dbReference type="InterPro" id="IPR008559">
    <property type="entry name" value="TMCO1"/>
</dbReference>
<dbReference type="PANTHER" id="PTHR20917:SF0">
    <property type="entry name" value="CALCIUM LOAD-ACTIVATED CALCIUM CHANNEL"/>
    <property type="match status" value="1"/>
</dbReference>
<dbReference type="PANTHER" id="PTHR20917">
    <property type="entry name" value="PNAS-RELATED"/>
    <property type="match status" value="1"/>
</dbReference>
<dbReference type="Pfam" id="PF01956">
    <property type="entry name" value="EMC3_TMCO1"/>
    <property type="match status" value="1"/>
</dbReference>
<dbReference type="PIRSF" id="PIRSF023322">
    <property type="entry name" value="DUF841_euk"/>
    <property type="match status" value="1"/>
</dbReference>
<dbReference type="SMART" id="SM01415">
    <property type="entry name" value="DUF106"/>
    <property type="match status" value="1"/>
</dbReference>
<feature type="chain" id="PRO_5035705509" description="Calcium load-activated calcium channel">
    <location>
        <begin position="1"/>
        <end position="188"/>
    </location>
</feature>
<feature type="topological domain" description="Lumenal" evidence="5 8">
    <location>
        <begin position="1"/>
        <end position="4"/>
    </location>
</feature>
<feature type="transmembrane region" description="Helical" evidence="5 8">
    <location>
        <begin position="5"/>
        <end position="32"/>
    </location>
</feature>
<feature type="topological domain" description="Cytoplasmic" evidence="5 8">
    <location>
        <begin position="33"/>
        <end position="86"/>
    </location>
</feature>
<feature type="transmembrane region" description="Helical" evidence="5 8">
    <location>
        <begin position="87"/>
        <end position="106"/>
    </location>
</feature>
<feature type="topological domain" description="Lumenal" evidence="5 8">
    <location>
        <begin position="107"/>
        <end position="120"/>
    </location>
</feature>
<feature type="intramembrane region" evidence="5 8">
    <location>
        <begin position="121"/>
        <end position="130"/>
    </location>
</feature>
<feature type="topological domain" description="Lumenal" evidence="5 8">
    <location>
        <begin position="131"/>
        <end position="140"/>
    </location>
</feature>
<feature type="transmembrane region" description="Helical" evidence="5 8">
    <location>
        <begin position="141"/>
        <end position="162"/>
    </location>
</feature>
<feature type="topological domain" description="Cytoplasmic" evidence="5 8">
    <location>
        <begin position="163"/>
        <end position="188"/>
    </location>
</feature>
<feature type="coiled-coil region" evidence="4">
    <location>
        <begin position="33"/>
        <end position="89"/>
    </location>
</feature>
<feature type="modified residue" description="Phosphoserine" evidence="3">
    <location>
        <position position="188"/>
    </location>
</feature>
<name>TMCO1_CANLF</name>
<comment type="function">
    <text evidence="2 3 5">Endoplasmic reticulum (ER) calcium-selective channel preventing intracellular Ca2(+) stores from overfilling and maintaining calcium homeostasis in the ER. In response to endoplasmic reticulum (ER) Ca2(+) overloading, assembles into a homotetramer, forming a functional calcium-selective channel facilitating Ca2(+) release (By similarity). Mediates ER Ca2(+) homeostasis in osteoblasts and plays a key role in bone formation, via the CaMKII-HDAC4-RUNX2 signaling axis (By similarity). Component of the multi-pass translocon (MPT) complex that mediates insertion of multi-pass membrane proteins into the lipid bilayer of membranes (PubMed:36261528). The MPT complex takes over after the SEC61 complex: following membrane insertion of the first few transmembrane segments of proteins by the SEC61 complex, the MPT complex occludes the lateral gate of the SEC61 complex to promote insertion of subsequent transmembrane regions (PubMed:36261528). Within the MPT complex, the GEL subcomplex may mediate insertion of transmembrane regions into the membrane (PubMed:36261528).</text>
</comment>
<comment type="catalytic activity">
    <reaction evidence="3">
        <text>Ca(2+)(in) = Ca(2+)(out)</text>
        <dbReference type="Rhea" id="RHEA:29671"/>
        <dbReference type="ChEBI" id="CHEBI:29108"/>
    </reaction>
</comment>
<comment type="subunit">
    <text evidence="3 5">Homodimer and homotetramer (By similarity). Homodimer under resting conditions; forms homotetramers following ER calcium overload (By similarity). Component of the GET- and EMC-like (GEL) complex, composed of RAB5IF/OPTI and TMCO1 (PubMed:36261528). The GEL complex is part of the multi-pass translocon (MPT) complex, composed of three subcomplexes, the GEL complex (composed of RAB5IF/OPTI and TMCO1), the BOS complex (composed of NCLN/Nicalin, NOMO1 and TMEM147) and the PAT complex (composed of WDR83OS/Asterix and CCDC47) (PubMed:36261528). The MPT complex associates with the SEC61 complex (PubMed:36261528).</text>
</comment>
<comment type="subcellular location">
    <subcellularLocation>
        <location evidence="5">Endoplasmic reticulum membrane</location>
        <topology evidence="5">Multi-pass membrane protein</topology>
    </subcellularLocation>
    <subcellularLocation>
        <location evidence="3">Golgi apparatus membrane</location>
        <topology evidence="5">Multi-pass membrane protein</topology>
    </subcellularLocation>
    <subcellularLocation>
        <location evidence="1">Mitochondrion membrane</location>
        <topology evidence="3">Multi-pass membrane protein</topology>
    </subcellularLocation>
    <text evidence="3">The first transmembrane region is required for localization to the endoplasmic reticulum.</text>
</comment>
<comment type="similarity">
    <text evidence="7">Belongs to the TMCO1 family.</text>
</comment>
<evidence type="ECO:0000250" key="1">
    <source>
        <dbReference type="UniProtKB" id="C5HGF3"/>
    </source>
</evidence>
<evidence type="ECO:0000250" key="2">
    <source>
        <dbReference type="UniProtKB" id="Q921L3"/>
    </source>
</evidence>
<evidence type="ECO:0000250" key="3">
    <source>
        <dbReference type="UniProtKB" id="Q9UM00"/>
    </source>
</evidence>
<evidence type="ECO:0000255" key="4"/>
<evidence type="ECO:0000269" key="5">
    <source>
    </source>
</evidence>
<evidence type="ECO:0000303" key="6">
    <source>
    </source>
</evidence>
<evidence type="ECO:0000305" key="7"/>
<evidence type="ECO:0007744" key="8">
    <source>
        <dbReference type="PDB" id="7TUT"/>
    </source>
</evidence>
<keyword id="KW-0002">3D-structure</keyword>
<keyword id="KW-0106">Calcium</keyword>
<keyword id="KW-0107">Calcium channel</keyword>
<keyword id="KW-0109">Calcium transport</keyword>
<keyword id="KW-0175">Coiled coil</keyword>
<keyword id="KW-0256">Endoplasmic reticulum</keyword>
<keyword id="KW-0333">Golgi apparatus</keyword>
<keyword id="KW-0407">Ion channel</keyword>
<keyword id="KW-0406">Ion transport</keyword>
<keyword id="KW-0472">Membrane</keyword>
<keyword id="KW-0496">Mitochondrion</keyword>
<keyword id="KW-0597">Phosphoprotein</keyword>
<keyword id="KW-1185">Reference proteome</keyword>
<keyword id="KW-0812">Transmembrane</keyword>
<keyword id="KW-1133">Transmembrane helix</keyword>
<keyword id="KW-0813">Transport</keyword>
<protein>
    <recommendedName>
        <fullName evidence="7">Calcium load-activated calcium channel</fullName>
        <shortName evidence="3">CLAC channel</shortName>
    </recommendedName>
    <alternativeName>
        <fullName evidence="7">GEL complex subunit TMCO1</fullName>
    </alternativeName>
    <alternativeName>
        <fullName evidence="3">Transmembrane and coiled-coil domain-containing protein 1</fullName>
    </alternativeName>
</protein>
<proteinExistence type="evidence at protein level"/>
<sequence length="188" mass="21175">MSTMFADTLLIVFISVCTALLAEGITWVLVYRTDKYKRLKAEVEKQSKKLEKKKETITESAGRQQKKKIERQEEKLKNNNRDLSMVRMKSMFAIGFCFTALMGMFNSIFDGRVVAKLPFTPLSYIQGLSHRNLLGDDTTDCSFIFLYILCTMSIRQNIQKILGLAPSRAATKQAGGFLGPPPPSGKFS</sequence>
<organism>
    <name type="scientific">Canis lupus familiaris</name>
    <name type="common">Dog</name>
    <name type="synonym">Canis familiaris</name>
    <dbReference type="NCBI Taxonomy" id="9615"/>
    <lineage>
        <taxon>Eukaryota</taxon>
        <taxon>Metazoa</taxon>
        <taxon>Chordata</taxon>
        <taxon>Craniata</taxon>
        <taxon>Vertebrata</taxon>
        <taxon>Euteleostomi</taxon>
        <taxon>Mammalia</taxon>
        <taxon>Eutheria</taxon>
        <taxon>Laurasiatheria</taxon>
        <taxon>Carnivora</taxon>
        <taxon>Caniformia</taxon>
        <taxon>Canidae</taxon>
        <taxon>Canis</taxon>
    </lineage>
</organism>